<protein>
    <recommendedName>
        <fullName evidence="1">tRNA uridine(34) hydroxylase</fullName>
        <ecNumber evidence="1">1.14.-.-</ecNumber>
    </recommendedName>
    <alternativeName>
        <fullName evidence="1">tRNA hydroxylation protein O</fullName>
    </alternativeName>
</protein>
<gene>
    <name evidence="1" type="primary">trhO</name>
    <name type="ordered locus">Bcen2424_2314</name>
</gene>
<name>TRHO_BURCH</name>
<keyword id="KW-0560">Oxidoreductase</keyword>
<keyword id="KW-0819">tRNA processing</keyword>
<reference key="1">
    <citation type="submission" date="2006-08" db="EMBL/GenBank/DDBJ databases">
        <title>Complete sequence of chromosome 1 of Burkholderia cenocepacia HI2424.</title>
        <authorList>
            <person name="Copeland A."/>
            <person name="Lucas S."/>
            <person name="Lapidus A."/>
            <person name="Barry K."/>
            <person name="Detter J.C."/>
            <person name="Glavina del Rio T."/>
            <person name="Hammon N."/>
            <person name="Israni S."/>
            <person name="Pitluck S."/>
            <person name="Chain P."/>
            <person name="Malfatti S."/>
            <person name="Shin M."/>
            <person name="Vergez L."/>
            <person name="Schmutz J."/>
            <person name="Larimer F."/>
            <person name="Land M."/>
            <person name="Hauser L."/>
            <person name="Kyrpides N."/>
            <person name="Kim E."/>
            <person name="LiPuma J.J."/>
            <person name="Gonzalez C.F."/>
            <person name="Konstantinidis K."/>
            <person name="Tiedje J.M."/>
            <person name="Richardson P."/>
        </authorList>
    </citation>
    <scope>NUCLEOTIDE SEQUENCE [LARGE SCALE GENOMIC DNA]</scope>
    <source>
        <strain>HI2424</strain>
    </source>
</reference>
<comment type="function">
    <text evidence="1">Catalyzes oxygen-dependent 5-hydroxyuridine (ho5U) modification at position 34 in tRNAs.</text>
</comment>
<comment type="catalytic activity">
    <reaction evidence="1">
        <text>uridine(34) in tRNA + AH2 + O2 = 5-hydroxyuridine(34) in tRNA + A + H2O</text>
        <dbReference type="Rhea" id="RHEA:64224"/>
        <dbReference type="Rhea" id="RHEA-COMP:11727"/>
        <dbReference type="Rhea" id="RHEA-COMP:13381"/>
        <dbReference type="ChEBI" id="CHEBI:13193"/>
        <dbReference type="ChEBI" id="CHEBI:15377"/>
        <dbReference type="ChEBI" id="CHEBI:15379"/>
        <dbReference type="ChEBI" id="CHEBI:17499"/>
        <dbReference type="ChEBI" id="CHEBI:65315"/>
        <dbReference type="ChEBI" id="CHEBI:136877"/>
    </reaction>
</comment>
<comment type="similarity">
    <text evidence="1">Belongs to the TrhO family.</text>
</comment>
<evidence type="ECO:0000255" key="1">
    <source>
        <dbReference type="HAMAP-Rule" id="MF_00469"/>
    </source>
</evidence>
<dbReference type="EC" id="1.14.-.-" evidence="1"/>
<dbReference type="EMBL" id="CP000458">
    <property type="protein sequence ID" value="ABK09065.1"/>
    <property type="molecule type" value="Genomic_DNA"/>
</dbReference>
<dbReference type="RefSeq" id="WP_011694341.1">
    <property type="nucleotide sequence ID" value="NC_008542.1"/>
</dbReference>
<dbReference type="SMR" id="A0K988"/>
<dbReference type="KEGG" id="bch:Bcen2424_2314"/>
<dbReference type="HOGENOM" id="CLU_038878_0_1_4"/>
<dbReference type="GO" id="GO:0016705">
    <property type="term" value="F:oxidoreductase activity, acting on paired donors, with incorporation or reduction of molecular oxygen"/>
    <property type="evidence" value="ECO:0007669"/>
    <property type="project" value="UniProtKB-UniRule"/>
</dbReference>
<dbReference type="GO" id="GO:0006400">
    <property type="term" value="P:tRNA modification"/>
    <property type="evidence" value="ECO:0007669"/>
    <property type="project" value="UniProtKB-UniRule"/>
</dbReference>
<dbReference type="CDD" id="cd01518">
    <property type="entry name" value="RHOD_YceA"/>
    <property type="match status" value="1"/>
</dbReference>
<dbReference type="Gene3D" id="3.30.70.100">
    <property type="match status" value="1"/>
</dbReference>
<dbReference type="Gene3D" id="3.40.250.10">
    <property type="entry name" value="Rhodanese-like domain"/>
    <property type="match status" value="1"/>
</dbReference>
<dbReference type="HAMAP" id="MF_00469">
    <property type="entry name" value="TrhO"/>
    <property type="match status" value="1"/>
</dbReference>
<dbReference type="InterPro" id="IPR001763">
    <property type="entry name" value="Rhodanese-like_dom"/>
</dbReference>
<dbReference type="InterPro" id="IPR036873">
    <property type="entry name" value="Rhodanese-like_dom_sf"/>
</dbReference>
<dbReference type="InterPro" id="IPR020936">
    <property type="entry name" value="TrhO"/>
</dbReference>
<dbReference type="InterPro" id="IPR040503">
    <property type="entry name" value="TRHO_N"/>
</dbReference>
<dbReference type="NCBIfam" id="NF003703">
    <property type="entry name" value="PRK05320.1"/>
    <property type="match status" value="1"/>
</dbReference>
<dbReference type="PANTHER" id="PTHR43268:SF3">
    <property type="entry name" value="RHODANESE-LIKE DOMAIN-CONTAINING PROTEIN 7-RELATED"/>
    <property type="match status" value="1"/>
</dbReference>
<dbReference type="PANTHER" id="PTHR43268">
    <property type="entry name" value="THIOSULFATE SULFURTRANSFERASE/RHODANESE-LIKE DOMAIN-CONTAINING PROTEIN 2"/>
    <property type="match status" value="1"/>
</dbReference>
<dbReference type="Pfam" id="PF00581">
    <property type="entry name" value="Rhodanese"/>
    <property type="match status" value="1"/>
</dbReference>
<dbReference type="Pfam" id="PF17773">
    <property type="entry name" value="UPF0176_N"/>
    <property type="match status" value="1"/>
</dbReference>
<dbReference type="SMART" id="SM00450">
    <property type="entry name" value="RHOD"/>
    <property type="match status" value="1"/>
</dbReference>
<dbReference type="SUPFAM" id="SSF52821">
    <property type="entry name" value="Rhodanese/Cell cycle control phosphatase"/>
    <property type="match status" value="1"/>
</dbReference>
<dbReference type="PROSITE" id="PS50206">
    <property type="entry name" value="RHODANESE_3"/>
    <property type="match status" value="1"/>
</dbReference>
<accession>A0K988</accession>
<sequence>MTIVNLAAYHFVSLDANEQWRPLVTARCNELGLRGTILLAPEGINLFIAGTREATDAFIAYIRHDPLFEGKFATLQFKESLSDSQPFRRMLVRLKREIITMKKPAIKPELGRAPFVDARTLKAWLDRGHDDAGRPVVMLDTRNAFEVDVGTFDNALDYRIDKFSEFPEVIDANRADLEGKTVVSFCTGGIRCEKAAIHMKEIGIDNVYQLEGGILKYFEEVGGAHYHGDCFVFDYRTALNPQLQPTENVTCFACRAVVTPEAQQSPSYVPGKSCPACPQAASAA</sequence>
<feature type="chain" id="PRO_1000013726" description="tRNA uridine(34) hydroxylase">
    <location>
        <begin position="1"/>
        <end position="284"/>
    </location>
</feature>
<feature type="domain" description="Rhodanese" evidence="1">
    <location>
        <begin position="132"/>
        <end position="226"/>
    </location>
</feature>
<feature type="active site" description="Cysteine persulfide intermediate" evidence="1">
    <location>
        <position position="186"/>
    </location>
</feature>
<organism>
    <name type="scientific">Burkholderia cenocepacia (strain HI2424)</name>
    <dbReference type="NCBI Taxonomy" id="331272"/>
    <lineage>
        <taxon>Bacteria</taxon>
        <taxon>Pseudomonadati</taxon>
        <taxon>Pseudomonadota</taxon>
        <taxon>Betaproteobacteria</taxon>
        <taxon>Burkholderiales</taxon>
        <taxon>Burkholderiaceae</taxon>
        <taxon>Burkholderia</taxon>
        <taxon>Burkholderia cepacia complex</taxon>
    </lineage>
</organism>
<proteinExistence type="inferred from homology"/>